<accession>Q8HXW8</accession>
<evidence type="ECO:0000250" key="1">
    <source>
        <dbReference type="UniProtKB" id="G2Q0E2"/>
    </source>
</evidence>
<evidence type="ECO:0000250" key="2">
    <source>
        <dbReference type="UniProtKB" id="O60683"/>
    </source>
</evidence>
<evidence type="ECO:0000250" key="3">
    <source>
        <dbReference type="UniProtKB" id="Q05568"/>
    </source>
</evidence>
<evidence type="ECO:0000255" key="4"/>
<evidence type="ECO:0000255" key="5">
    <source>
        <dbReference type="PROSITE-ProRule" id="PRU00175"/>
    </source>
</evidence>
<evidence type="ECO:0000303" key="6">
    <source ref="1"/>
</evidence>
<evidence type="ECO:0000305" key="7"/>
<feature type="chain" id="PRO_0000056377" description="Peroxisome biogenesis factor 10">
    <location>
        <begin position="1"/>
        <end position="326"/>
    </location>
</feature>
<feature type="topological domain" description="Peroxisomal matrix" evidence="1">
    <location>
        <begin position="1"/>
        <end position="7"/>
    </location>
</feature>
<feature type="transmembrane region" description="Helical; Name=TM1" evidence="1">
    <location>
        <begin position="8"/>
        <end position="37"/>
    </location>
</feature>
<feature type="topological domain" description="Cytoplasmic" evidence="1">
    <location>
        <position position="38"/>
    </location>
</feature>
<feature type="transmembrane region" description="Helical; Name=TM2" evidence="1">
    <location>
        <begin position="39"/>
        <end position="60"/>
    </location>
</feature>
<feature type="topological domain" description="Peroxisomal matrix" evidence="1">
    <location>
        <begin position="61"/>
        <end position="89"/>
    </location>
</feature>
<feature type="transmembrane region" description="Helical; Name=TM3" evidence="1">
    <location>
        <begin position="90"/>
        <end position="122"/>
    </location>
</feature>
<feature type="topological domain" description="Cytoplasmic" evidence="1">
    <location>
        <begin position="123"/>
        <end position="147"/>
    </location>
</feature>
<feature type="transmembrane region" description="Helical; Name=TM4" evidence="1">
    <location>
        <begin position="148"/>
        <end position="185"/>
    </location>
</feature>
<feature type="topological domain" description="Peroxisomal matrix" evidence="1">
    <location>
        <begin position="186"/>
        <end position="216"/>
    </location>
</feature>
<feature type="transmembrane region" description="Helical; Name=TM5" evidence="1">
    <location>
        <begin position="217"/>
        <end position="236"/>
    </location>
</feature>
<feature type="topological domain" description="Cytoplasmic" evidence="1">
    <location>
        <begin position="237"/>
        <end position="326"/>
    </location>
</feature>
<feature type="zinc finger region" description="RING-type" evidence="5">
    <location>
        <begin position="273"/>
        <end position="311"/>
    </location>
</feature>
<feature type="binding site" evidence="1">
    <location>
        <position position="273"/>
    </location>
    <ligand>
        <name>Zn(2+)</name>
        <dbReference type="ChEBI" id="CHEBI:29105"/>
        <label>1</label>
    </ligand>
</feature>
<feature type="binding site" evidence="1">
    <location>
        <position position="276"/>
    </location>
    <ligand>
        <name>Zn(2+)</name>
        <dbReference type="ChEBI" id="CHEBI:29105"/>
        <label>1</label>
    </ligand>
</feature>
<feature type="binding site" evidence="1">
    <location>
        <position position="288"/>
    </location>
    <ligand>
        <name>Zn(2+)</name>
        <dbReference type="ChEBI" id="CHEBI:29105"/>
        <label>2</label>
    </ligand>
</feature>
<feature type="binding site" evidence="1">
    <location>
        <position position="290"/>
    </location>
    <ligand>
        <name>Zn(2+)</name>
        <dbReference type="ChEBI" id="CHEBI:29105"/>
        <label>2</label>
    </ligand>
</feature>
<feature type="binding site" evidence="1">
    <location>
        <position position="293"/>
    </location>
    <ligand>
        <name>Zn(2+)</name>
        <dbReference type="ChEBI" id="CHEBI:29105"/>
        <label>1</label>
    </ligand>
</feature>
<feature type="binding site" evidence="1">
    <location>
        <position position="296"/>
    </location>
    <ligand>
        <name>Zn(2+)</name>
        <dbReference type="ChEBI" id="CHEBI:29105"/>
        <label>1</label>
    </ligand>
</feature>
<feature type="binding site" evidence="1">
    <location>
        <position position="307"/>
    </location>
    <ligand>
        <name>Zn(2+)</name>
        <dbReference type="ChEBI" id="CHEBI:29105"/>
        <label>2</label>
    </ligand>
</feature>
<feature type="binding site" evidence="1">
    <location>
        <position position="310"/>
    </location>
    <ligand>
        <name>Zn(2+)</name>
        <dbReference type="ChEBI" id="CHEBI:29105"/>
        <label>2</label>
    </ligand>
</feature>
<dbReference type="EC" id="2.3.2.27" evidence="2"/>
<dbReference type="EMBL" id="AB083323">
    <property type="protein sequence ID" value="BAC20602.1"/>
    <property type="molecule type" value="mRNA"/>
</dbReference>
<dbReference type="RefSeq" id="NP_001270672.1">
    <property type="nucleotide sequence ID" value="NM_001283743.1"/>
</dbReference>
<dbReference type="SMR" id="Q8HXW8"/>
<dbReference type="STRING" id="9541.ENSMFAP00000000248"/>
<dbReference type="eggNOG" id="KOG0317">
    <property type="taxonomic scope" value="Eukaryota"/>
</dbReference>
<dbReference type="OrthoDB" id="6270329at2759"/>
<dbReference type="UniPathway" id="UPA00143"/>
<dbReference type="Proteomes" id="UP000233100">
    <property type="component" value="Unplaced"/>
</dbReference>
<dbReference type="GO" id="GO:0005778">
    <property type="term" value="C:peroxisomal membrane"/>
    <property type="evidence" value="ECO:0000250"/>
    <property type="project" value="UniProtKB"/>
</dbReference>
<dbReference type="GO" id="GO:0016740">
    <property type="term" value="F:transferase activity"/>
    <property type="evidence" value="ECO:0007669"/>
    <property type="project" value="UniProtKB-KW"/>
</dbReference>
<dbReference type="GO" id="GO:0008270">
    <property type="term" value="F:zinc ion binding"/>
    <property type="evidence" value="ECO:0007669"/>
    <property type="project" value="UniProtKB-KW"/>
</dbReference>
<dbReference type="GO" id="GO:0007031">
    <property type="term" value="P:peroxisome organization"/>
    <property type="evidence" value="ECO:0000250"/>
    <property type="project" value="UniProtKB"/>
</dbReference>
<dbReference type="GO" id="GO:0016558">
    <property type="term" value="P:protein import into peroxisome matrix"/>
    <property type="evidence" value="ECO:0000250"/>
    <property type="project" value="UniProtKB"/>
</dbReference>
<dbReference type="GO" id="GO:0016567">
    <property type="term" value="P:protein ubiquitination"/>
    <property type="evidence" value="ECO:0007669"/>
    <property type="project" value="UniProtKB-UniPathway"/>
</dbReference>
<dbReference type="CDD" id="cd16527">
    <property type="entry name" value="RING-HC_PEX10"/>
    <property type="match status" value="1"/>
</dbReference>
<dbReference type="FunFam" id="3.30.40.10:FF:000332">
    <property type="entry name" value="Peroxisome biogenesis factor 10"/>
    <property type="match status" value="1"/>
</dbReference>
<dbReference type="Gene3D" id="3.30.40.10">
    <property type="entry name" value="Zinc/RING finger domain, C3HC4 (zinc finger)"/>
    <property type="match status" value="1"/>
</dbReference>
<dbReference type="InterPro" id="IPR025654">
    <property type="entry name" value="PEX2/10"/>
</dbReference>
<dbReference type="InterPro" id="IPR006845">
    <property type="entry name" value="Pex_N"/>
</dbReference>
<dbReference type="InterPro" id="IPR001841">
    <property type="entry name" value="Znf_RING"/>
</dbReference>
<dbReference type="InterPro" id="IPR013083">
    <property type="entry name" value="Znf_RING/FYVE/PHD"/>
</dbReference>
<dbReference type="InterPro" id="IPR017907">
    <property type="entry name" value="Znf_RING_CS"/>
</dbReference>
<dbReference type="PANTHER" id="PTHR23350">
    <property type="entry name" value="PEROXISOME ASSEMBLY PROTEIN 10"/>
    <property type="match status" value="1"/>
</dbReference>
<dbReference type="PANTHER" id="PTHR23350:SF0">
    <property type="entry name" value="PEROXISOME BIOGENESIS FACTOR 10"/>
    <property type="match status" value="1"/>
</dbReference>
<dbReference type="Pfam" id="PF04757">
    <property type="entry name" value="Pex2_Pex12"/>
    <property type="match status" value="1"/>
</dbReference>
<dbReference type="Pfam" id="PF13639">
    <property type="entry name" value="zf-RING_2"/>
    <property type="match status" value="1"/>
</dbReference>
<dbReference type="SMART" id="SM00184">
    <property type="entry name" value="RING"/>
    <property type="match status" value="1"/>
</dbReference>
<dbReference type="SUPFAM" id="SSF57850">
    <property type="entry name" value="RING/U-box"/>
    <property type="match status" value="1"/>
</dbReference>
<dbReference type="PROSITE" id="PS00518">
    <property type="entry name" value="ZF_RING_1"/>
    <property type="match status" value="1"/>
</dbReference>
<dbReference type="PROSITE" id="PS50089">
    <property type="entry name" value="ZF_RING_2"/>
    <property type="match status" value="1"/>
</dbReference>
<organism>
    <name type="scientific">Macaca fascicularis</name>
    <name type="common">Crab-eating macaque</name>
    <name type="synonym">Cynomolgus monkey</name>
    <dbReference type="NCBI Taxonomy" id="9541"/>
    <lineage>
        <taxon>Eukaryota</taxon>
        <taxon>Metazoa</taxon>
        <taxon>Chordata</taxon>
        <taxon>Craniata</taxon>
        <taxon>Vertebrata</taxon>
        <taxon>Euteleostomi</taxon>
        <taxon>Mammalia</taxon>
        <taxon>Eutheria</taxon>
        <taxon>Euarchontoglires</taxon>
        <taxon>Primates</taxon>
        <taxon>Haplorrhini</taxon>
        <taxon>Catarrhini</taxon>
        <taxon>Cercopithecidae</taxon>
        <taxon>Cercopithecinae</taxon>
        <taxon>Macaca</taxon>
    </lineage>
</organism>
<name>PEX10_MACFA</name>
<reference key="1">
    <citation type="submission" date="2002-04" db="EMBL/GenBank/DDBJ databases">
        <title>Isolation and characterization of cDNA for macaque neurological disease genes.</title>
        <authorList>
            <person name="Kusuda J."/>
            <person name="Osada N."/>
            <person name="Hida M."/>
            <person name="Sugano S."/>
            <person name="Hashimoto K."/>
        </authorList>
    </citation>
    <scope>NUCLEOTIDE SEQUENCE [LARGE SCALE MRNA]</scope>
    <source>
        <tissue>Brain cortex</tissue>
    </source>
</reference>
<comment type="function">
    <text evidence="2 3">E3 ubiquitin-protein ligase component of a retrotranslocation channel required for peroxisome organization by mediating export of the PEX5 receptor from peroxisomes to the cytosol, thereby promoting PEX5 recycling (By similarity). The retrotranslocation channel is composed of PEX2, PEX10 and PEX12; each subunit contributing transmembrane segments that coassemble into an open channel that specifically allows the passage of PEX5 through the peroxisomal membrane (By similarity). PEX10 also regulates PEX5 recycling by acting as a E3 ubiquitin-protein ligase (By similarity). When PEX5 recycling is compromised, PEX10 catalyzes polyubiquitination of PEX5 during its passage through the retrotranslocation channel, leading to its degradation (By similarity).</text>
</comment>
<comment type="catalytic activity">
    <reaction evidence="2">
        <text>S-ubiquitinyl-[E2 ubiquitin-conjugating enzyme]-L-cysteine + [acceptor protein]-L-lysine = [E2 ubiquitin-conjugating enzyme]-L-cysteine + N(6)-ubiquitinyl-[acceptor protein]-L-lysine.</text>
        <dbReference type="EC" id="2.3.2.27"/>
    </reaction>
</comment>
<comment type="activity regulation">
    <text evidence="2">The E3 ubiquitin-protein ligase activity is stimulated by PEX12.</text>
</comment>
<comment type="pathway">
    <text evidence="2">Protein modification; protein ubiquitination.</text>
</comment>
<comment type="subunit">
    <text evidence="2">Component of the PEX2-PEX10-PEX12 retrotranslocation channel, composed of PEX2, PEX10 and PEX12. Interacts with PEX19.</text>
</comment>
<comment type="subcellular location">
    <subcellularLocation>
        <location evidence="2">Peroxisome membrane</location>
        <topology evidence="4">Multi-pass membrane protein</topology>
    </subcellularLocation>
</comment>
<comment type="domain">
    <text evidence="1">The three subunits of the retrotranslocation channel (PEX2, PEX10 and PEX12) coassemble in the membrane into a channel with an open 10 Angstrom pore. The RING-type zinc-fingers that catalyze PEX5 receptor ubiquitination are positioned above the pore on the cytosolic side of the complex.</text>
</comment>
<comment type="similarity">
    <text evidence="7">Belongs to the pex2/pex10/pex12 family.</text>
</comment>
<proteinExistence type="evidence at transcript level"/>
<protein>
    <recommendedName>
        <fullName evidence="7">Peroxisome biogenesis factor 10</fullName>
        <ecNumber evidence="2">2.3.2.27</ecNumber>
    </recommendedName>
    <alternativeName>
        <fullName evidence="7">Peroxin-10</fullName>
    </alternativeName>
    <alternativeName>
        <fullName>Peroxisomal biogenesis factor 10</fullName>
    </alternativeName>
    <alternativeName>
        <fullName>Peroxisome assembly protein 10</fullName>
    </alternativeName>
</protein>
<gene>
    <name type="primary">PEX10</name>
    <name evidence="6" type="ORF">QccE-12251</name>
</gene>
<sequence length="326" mass="37132">MAPAAASPPEVIRAAQKDEYYRGGLRSAAGGALHSLAGARKWLEWRKEVELLSDVAYFGLTTLAGYQTLGEEYVSIVRVDPSQTRVPSWLRRGVLVTLHAVLPYLLDKVLLPLEQELQADPDSGRPSQGSLVPGGRGCSGVRRWVRRHTATLTEQQRRALLRAAFVLRQGLACLQQLHVAWFYIHGVFYHLAKRLTGITYLRVRSLPGEDLRARVSYRLLGVVSLLHLVLSVGLRLYGFRQRQRARKEWRLHRGLSHRRGSLEERAVSRNPLCTLCLEERRHPTATPCGHLFCWECITAWCSSKAECPLCREKFPPQKLIYLRHYR</sequence>
<keyword id="KW-0472">Membrane</keyword>
<keyword id="KW-0479">Metal-binding</keyword>
<keyword id="KW-0576">Peroxisome</keyword>
<keyword id="KW-0962">Peroxisome biogenesis</keyword>
<keyword id="KW-0653">Protein transport</keyword>
<keyword id="KW-1185">Reference proteome</keyword>
<keyword id="KW-0808">Transferase</keyword>
<keyword id="KW-0812">Transmembrane</keyword>
<keyword id="KW-1133">Transmembrane helix</keyword>
<keyword id="KW-0813">Transport</keyword>
<keyword id="KW-0833">Ubl conjugation pathway</keyword>
<keyword id="KW-0862">Zinc</keyword>
<keyword id="KW-0863">Zinc-finger</keyword>